<proteinExistence type="evidence at protein level"/>
<accession>C4LYI2</accession>
<feature type="chain" id="PRO_0000421976" description="Histidine triad nucleotide-binding protein">
    <location>
        <begin position="1"/>
        <end position="113"/>
    </location>
</feature>
<feature type="domain" description="HIT" evidence="3">
    <location>
        <begin position="6"/>
        <end position="113"/>
    </location>
</feature>
<feature type="short sequence motif" description="Histidine triad motif">
    <location>
        <begin position="97"/>
        <end position="101"/>
    </location>
</feature>
<feature type="active site" description="Tele-AMP-histidine intermediate" evidence="2">
    <location>
        <position position="99"/>
    </location>
</feature>
<feature type="binding site" evidence="6 7 8">
    <location>
        <position position="5"/>
    </location>
    <ligand>
        <name>Zn(2+)</name>
        <dbReference type="ChEBI" id="CHEBI:29105"/>
    </ligand>
</feature>
<feature type="binding site" evidence="6 7 8">
    <location>
        <position position="8"/>
    </location>
    <ligand>
        <name>Zn(2+)</name>
        <dbReference type="ChEBI" id="CHEBI:29105"/>
    </ligand>
</feature>
<feature type="binding site" evidence="4 7">
    <location>
        <position position="31"/>
    </location>
    <ligand>
        <name>AMP</name>
        <dbReference type="ChEBI" id="CHEBI:456215"/>
    </ligand>
</feature>
<feature type="binding site" evidence="6 7 8">
    <location>
        <position position="47"/>
    </location>
    <ligand>
        <name>Zn(2+)</name>
        <dbReference type="ChEBI" id="CHEBI:29105"/>
    </ligand>
</feature>
<feature type="binding site" evidence="4 7">
    <location>
        <position position="86"/>
    </location>
    <ligand>
        <name>AMP</name>
        <dbReference type="ChEBI" id="CHEBI:456215"/>
    </ligand>
</feature>
<feature type="binding site" evidence="4 7">
    <location>
        <position position="92"/>
    </location>
    <ligand>
        <name>AMP</name>
        <dbReference type="ChEBI" id="CHEBI:456215"/>
    </ligand>
</feature>
<feature type="binding site" evidence="4 7">
    <location>
        <position position="94"/>
    </location>
    <ligand>
        <name>AMP</name>
        <dbReference type="ChEBI" id="CHEBI:456215"/>
    </ligand>
</feature>
<feature type="binding site" evidence="6 7 8">
    <location>
        <position position="97"/>
    </location>
    <ligand>
        <name>Zn(2+)</name>
        <dbReference type="ChEBI" id="CHEBI:29105"/>
    </ligand>
</feature>
<feature type="binding site" evidence="4 7">
    <location>
        <position position="99"/>
    </location>
    <ligand>
        <name>AMP</name>
        <dbReference type="ChEBI" id="CHEBI:456215"/>
    </ligand>
</feature>
<feature type="binding site" evidence="4 7">
    <location>
        <position position="101"/>
    </location>
    <ligand>
        <name>AMP</name>
        <dbReference type="ChEBI" id="CHEBI:456215"/>
    </ligand>
</feature>
<feature type="helix" evidence="10">
    <location>
        <begin position="1"/>
        <end position="4"/>
    </location>
</feature>
<feature type="helix" evidence="9">
    <location>
        <begin position="6"/>
        <end position="11"/>
    </location>
</feature>
<feature type="strand" evidence="9">
    <location>
        <begin position="19"/>
        <end position="22"/>
    </location>
</feature>
<feature type="strand" evidence="9">
    <location>
        <begin position="24"/>
        <end position="30"/>
    </location>
</feature>
<feature type="strand" evidence="9">
    <location>
        <begin position="35"/>
        <end position="46"/>
    </location>
</feature>
<feature type="helix" evidence="9">
    <location>
        <begin position="51"/>
        <end position="53"/>
    </location>
</feature>
<feature type="turn" evidence="9">
    <location>
        <begin position="56"/>
        <end position="58"/>
    </location>
</feature>
<feature type="helix" evidence="9">
    <location>
        <begin position="59"/>
        <end position="76"/>
    </location>
</feature>
<feature type="strand" evidence="9">
    <location>
        <begin position="81"/>
        <end position="84"/>
    </location>
</feature>
<feature type="turn" evidence="9">
    <location>
        <begin position="89"/>
        <end position="92"/>
    </location>
</feature>
<feature type="strand" evidence="9">
    <location>
        <begin position="95"/>
        <end position="97"/>
    </location>
</feature>
<feature type="strand" evidence="9">
    <location>
        <begin position="100"/>
        <end position="106"/>
    </location>
</feature>
<sequence length="113" mass="12701">MADSCIFCKIAQKQIPSTIVYEDDEIFAFKDINPIAPIHILVIPKQHIASLNEITEENEAFIGKVLYKVSLIGKKECPEGYRVVNNIGEDAGQTVKHIHFHILGGKKLAWDKL</sequence>
<reference key="1">
    <citation type="journal article" date="2005" name="Nature">
        <title>The genome of the protist parasite Entamoeba histolytica.</title>
        <authorList>
            <person name="Loftus B.J."/>
            <person name="Anderson I."/>
            <person name="Davies R."/>
            <person name="Alsmark U.C."/>
            <person name="Samuelson J."/>
            <person name="Amedeo P."/>
            <person name="Roncaglia P."/>
            <person name="Berriman M."/>
            <person name="Hirt R.P."/>
            <person name="Mann B.J."/>
            <person name="Nozaki T."/>
            <person name="Suh B."/>
            <person name="Pop M."/>
            <person name="Duchene M."/>
            <person name="Ackers J."/>
            <person name="Tannich E."/>
            <person name="Leippe M."/>
            <person name="Hofer M."/>
            <person name="Bruchhaus I."/>
            <person name="Willhoeft U."/>
            <person name="Bhattacharya A."/>
            <person name="Chillingworth T."/>
            <person name="Churcher C.M."/>
            <person name="Hance Z."/>
            <person name="Harris B."/>
            <person name="Harris D."/>
            <person name="Jagels K."/>
            <person name="Moule S."/>
            <person name="Mungall K.L."/>
            <person name="Ormond D."/>
            <person name="Squares R."/>
            <person name="Whitehead S."/>
            <person name="Quail M.A."/>
            <person name="Rabbinowitsch E."/>
            <person name="Norbertczak H."/>
            <person name="Price C."/>
            <person name="Wang Z."/>
            <person name="Guillen N."/>
            <person name="Gilchrist C."/>
            <person name="Stroup S.E."/>
            <person name="Bhattacharya S."/>
            <person name="Lohia A."/>
            <person name="Foster P.G."/>
            <person name="Sicheritz-Ponten T."/>
            <person name="Weber C."/>
            <person name="Singh U."/>
            <person name="Mukherjee C."/>
            <person name="El-Sayed N.M.A."/>
            <person name="Petri W.A."/>
            <person name="Clark C.G."/>
            <person name="Embley T.M."/>
            <person name="Barrell B.G."/>
            <person name="Fraser C.M."/>
            <person name="Hall N."/>
        </authorList>
    </citation>
    <scope>NUCLEOTIDE SEQUENCE [LARGE SCALE GENOMIC DNA]</scope>
    <source>
        <strain>ATCC 30459 / HM-1:IMSS / ABRM</strain>
    </source>
</reference>
<reference key="2">
    <citation type="journal article" date="2010" name="PLoS Negl. Trop. Dis.">
        <title>New assembly, reannotation and analysis of the Entamoeba histolytica genome reveal new genomic features and protein content information.</title>
        <authorList>
            <person name="Lorenzi H.A."/>
            <person name="Puiu D."/>
            <person name="Miller J.R."/>
            <person name="Brinkac L.M."/>
            <person name="Amedeo P."/>
            <person name="Hall N."/>
            <person name="Caler E.V."/>
        </authorList>
    </citation>
    <scope>GENOME REANNOTATION</scope>
    <source>
        <strain>ATCC 30459 / HM-1:IMSS / ABRM</strain>
    </source>
</reference>
<reference key="3">
    <citation type="journal article" date="2015" name="Acta Crystallogr. F Struct. Biol. Commun.">
        <title>Structures of a histidine triad family protein from Entamoeba histolytica bound to sulfate, AMP and GMP.</title>
        <authorList>
            <person name="Lorimer D.D."/>
            <person name="Choi R."/>
            <person name="Abramov A."/>
            <person name="Nakazawa Hewitt S."/>
            <person name="Gardberg A.S."/>
            <person name="Van Voorhis W.C."/>
            <person name="Staker B.L."/>
            <person name="Myler P.J."/>
            <person name="Edwards T.E."/>
        </authorList>
    </citation>
    <scope>X-RAY CRYSTALLOGRAPHY (1.40 ANGSTROMS) IN COMPLEXES WITH AMP; GMP AND ZN(2+)</scope>
</reference>
<protein>
    <recommendedName>
        <fullName>Histidine triad nucleotide-binding protein</fullName>
        <ecNumber>3.9.1.-</ecNumber>
    </recommendedName>
</protein>
<comment type="function">
    <text evidence="1">Hydrolyzes purine nucleotide phosphoramidates with a single phosphate group, including adenosine 5'monophosphoramidate (AMP-NH2), adenosine 5'monophosphomorpholidate (AMP-morpholidate) and guanosine 5'monophosphomorpholidate (GMP-morpholidate). Hydrolyzes lysyl-AMP (AMP-N-epsilon-(N-alpha-acetyl lysine methyl ester)) generated by lysine tRNA ligase, as well as Met-AMP, His-AMP and Asp-AMP, lysyl-GMP (GMP-N-epsilon-(N-alpha-acetyl lysine methyl ester)) and AMP-N-alanine methyl ester. May also function as scaffolding protein that mediates protein-protein interactions (By similarity).</text>
</comment>
<comment type="catalytic activity">
    <reaction evidence="2">
        <text>adenosine 5'-phosphoramidate + H2O = AMP + NH4(+)</text>
        <dbReference type="Rhea" id="RHEA:67916"/>
        <dbReference type="ChEBI" id="CHEBI:15377"/>
        <dbReference type="ChEBI" id="CHEBI:28938"/>
        <dbReference type="ChEBI" id="CHEBI:57890"/>
        <dbReference type="ChEBI" id="CHEBI:456215"/>
    </reaction>
</comment>
<comment type="subcellular location">
    <subcellularLocation>
        <location evidence="1">Nucleus</location>
    </subcellularLocation>
    <subcellularLocation>
        <location evidence="1">Cytoplasm</location>
    </subcellularLocation>
</comment>
<comment type="similarity">
    <text evidence="5">Belongs to the HINT family.</text>
</comment>
<dbReference type="EC" id="3.9.1.-"/>
<dbReference type="EMBL" id="DS571179">
    <property type="protein sequence ID" value="EAL50232.1"/>
    <property type="molecule type" value="Genomic_DNA"/>
</dbReference>
<dbReference type="RefSeq" id="XP_655618.1">
    <property type="nucleotide sequence ID" value="XM_650526.1"/>
</dbReference>
<dbReference type="PDB" id="3OJ7">
    <property type="method" value="X-ray"/>
    <property type="resolution" value="1.40 A"/>
    <property type="chains" value="A=1-113"/>
</dbReference>
<dbReference type="PDB" id="3OMF">
    <property type="method" value="X-ray"/>
    <property type="resolution" value="1.80 A"/>
    <property type="chains" value="A=1-113"/>
</dbReference>
<dbReference type="PDB" id="3OXK">
    <property type="method" value="X-ray"/>
    <property type="resolution" value="1.55 A"/>
    <property type="chains" value="A=1-113"/>
</dbReference>
<dbReference type="PDBsum" id="3OJ7"/>
<dbReference type="PDBsum" id="3OMF"/>
<dbReference type="PDBsum" id="3OXK"/>
<dbReference type="SMR" id="C4LYI2"/>
<dbReference type="FunCoup" id="C4LYI2">
    <property type="interactions" value="514"/>
</dbReference>
<dbReference type="STRING" id="5759.C4LYI2"/>
<dbReference type="EnsemblProtists" id="rna_EHI_093910-1">
    <property type="protein sequence ID" value="rna_EHI_093910-1"/>
    <property type="gene ID" value="EHI_093910"/>
</dbReference>
<dbReference type="GeneID" id="3409936"/>
<dbReference type="KEGG" id="ehi:EHI_093910"/>
<dbReference type="VEuPathDB" id="AmoebaDB:EHI5A_161370"/>
<dbReference type="VEuPathDB" id="AmoebaDB:EHI7A_185610"/>
<dbReference type="VEuPathDB" id="AmoebaDB:EHI8A_215710"/>
<dbReference type="VEuPathDB" id="AmoebaDB:EHI_093910"/>
<dbReference type="VEuPathDB" id="AmoebaDB:KM1_210220"/>
<dbReference type="eggNOG" id="KOG3275">
    <property type="taxonomic scope" value="Eukaryota"/>
</dbReference>
<dbReference type="HOGENOM" id="CLU_056776_8_1_1"/>
<dbReference type="InParanoid" id="C4LYI2"/>
<dbReference type="OMA" id="YRVVMNC"/>
<dbReference type="OrthoDB" id="672793at2759"/>
<dbReference type="EvolutionaryTrace" id="C4LYI2"/>
<dbReference type="Proteomes" id="UP000001926">
    <property type="component" value="Partially assembled WGS sequence"/>
</dbReference>
<dbReference type="GO" id="GO:0005737">
    <property type="term" value="C:cytoplasm"/>
    <property type="evidence" value="ECO:0000318"/>
    <property type="project" value="GO_Central"/>
</dbReference>
<dbReference type="GO" id="GO:0005634">
    <property type="term" value="C:nucleus"/>
    <property type="evidence" value="ECO:0007669"/>
    <property type="project" value="UniProtKB-SubCell"/>
</dbReference>
<dbReference type="GO" id="GO:0043530">
    <property type="term" value="F:adenosine 5'-monophosphoramidase activity"/>
    <property type="evidence" value="ECO:0007669"/>
    <property type="project" value="RHEA"/>
</dbReference>
<dbReference type="GO" id="GO:0016787">
    <property type="term" value="F:hydrolase activity"/>
    <property type="evidence" value="ECO:0000318"/>
    <property type="project" value="GO_Central"/>
</dbReference>
<dbReference type="GO" id="GO:0000166">
    <property type="term" value="F:nucleotide binding"/>
    <property type="evidence" value="ECO:0007669"/>
    <property type="project" value="UniProtKB-KW"/>
</dbReference>
<dbReference type="CDD" id="cd01276">
    <property type="entry name" value="PKCI_related"/>
    <property type="match status" value="1"/>
</dbReference>
<dbReference type="Gene3D" id="3.30.428.10">
    <property type="entry name" value="HIT-like"/>
    <property type="match status" value="1"/>
</dbReference>
<dbReference type="InterPro" id="IPR019808">
    <property type="entry name" value="Histidine_triad_CS"/>
</dbReference>
<dbReference type="InterPro" id="IPR001310">
    <property type="entry name" value="Histidine_triad_HIT"/>
</dbReference>
<dbReference type="InterPro" id="IPR011146">
    <property type="entry name" value="HIT-like"/>
</dbReference>
<dbReference type="InterPro" id="IPR036265">
    <property type="entry name" value="HIT-like_sf"/>
</dbReference>
<dbReference type="PANTHER" id="PTHR23089">
    <property type="entry name" value="HISTIDINE TRIAD HIT PROTEIN"/>
    <property type="match status" value="1"/>
</dbReference>
<dbReference type="Pfam" id="PF01230">
    <property type="entry name" value="HIT"/>
    <property type="match status" value="1"/>
</dbReference>
<dbReference type="PRINTS" id="PR00332">
    <property type="entry name" value="HISTRIAD"/>
</dbReference>
<dbReference type="SUPFAM" id="SSF54197">
    <property type="entry name" value="HIT-like"/>
    <property type="match status" value="1"/>
</dbReference>
<dbReference type="PROSITE" id="PS00892">
    <property type="entry name" value="HIT_1"/>
    <property type="match status" value="1"/>
</dbReference>
<dbReference type="PROSITE" id="PS51084">
    <property type="entry name" value="HIT_2"/>
    <property type="match status" value="1"/>
</dbReference>
<gene>
    <name type="ORF">EHI_093910</name>
</gene>
<organism>
    <name type="scientific">Entamoeba histolytica (strain ATCC 30459 / HM-1:IMSS / ABRM)</name>
    <dbReference type="NCBI Taxonomy" id="294381"/>
    <lineage>
        <taxon>Eukaryota</taxon>
        <taxon>Amoebozoa</taxon>
        <taxon>Evosea</taxon>
        <taxon>Archamoebae</taxon>
        <taxon>Mastigamoebida</taxon>
        <taxon>Entamoebidae</taxon>
        <taxon>Entamoeba</taxon>
    </lineage>
</organism>
<evidence type="ECO:0000250" key="1"/>
<evidence type="ECO:0000250" key="2">
    <source>
        <dbReference type="UniProtKB" id="P49773"/>
    </source>
</evidence>
<evidence type="ECO:0000255" key="3">
    <source>
        <dbReference type="PROSITE-ProRule" id="PRU00464"/>
    </source>
</evidence>
<evidence type="ECO:0000269" key="4">
    <source>
    </source>
</evidence>
<evidence type="ECO:0000305" key="5"/>
<evidence type="ECO:0007744" key="6">
    <source>
        <dbReference type="PDB" id="3OJ7"/>
    </source>
</evidence>
<evidence type="ECO:0007744" key="7">
    <source>
        <dbReference type="PDB" id="3OMF"/>
    </source>
</evidence>
<evidence type="ECO:0007744" key="8">
    <source>
        <dbReference type="PDB" id="3OXK"/>
    </source>
</evidence>
<evidence type="ECO:0007829" key="9">
    <source>
        <dbReference type="PDB" id="3OJ7"/>
    </source>
</evidence>
<evidence type="ECO:0007829" key="10">
    <source>
        <dbReference type="PDB" id="3OXK"/>
    </source>
</evidence>
<name>HIT_ENTH1</name>
<keyword id="KW-0002">3D-structure</keyword>
<keyword id="KW-0963">Cytoplasm</keyword>
<keyword id="KW-0378">Hydrolase</keyword>
<keyword id="KW-0547">Nucleotide-binding</keyword>
<keyword id="KW-0539">Nucleus</keyword>
<keyword id="KW-1185">Reference proteome</keyword>